<comment type="function">
    <text evidence="1">Plays critical roles in virus replication, from virus entry and uncoating to assembly and budding of the virus particle. M1 binding to ribonucleocapsids (RNPs) in nucleus seems to inhibit viral transcription. Interaction of viral NEP with M1-RNP is thought to promote nuclear export of the complex, which is targeted to the virion assembly site at the apical plasma membrane in polarized epithelial cells. Interactions with NA and HA may bring M1, a non-raft-associated protein, into lipid rafts. Forms a continuous shell on the inner side of the lipid bilayer in virion, where it binds the RNP. During virus entry into cell, the M2 ion channel acidifies the internal virion core, inducing M1 dissociation from the RNP. M1-free RNPs are transported to the nucleus, where viral transcription and replication can take place.</text>
</comment>
<comment type="function">
    <text evidence="1">Determines the virion's shape: spherical or filamentous. Clinical isolates of influenza are characterized by the presence of significant proportion of filamentous virions, whereas after multiple passage on eggs or cell culture, virions have only spherical morphology. Filamentous virions are thought to be important to infect neighboring cells, and spherical virions more suited to spread through aerosol between hosts organisms.</text>
</comment>
<comment type="subunit">
    <text evidence="1">Homodimer and homomultimer. Interacts with NEP. Binds ribonucleocapsid by both interacting with genomic RNA and NP protein. May interact with HA and NA. Cannot bind NP without genomic RNA.</text>
</comment>
<comment type="subcellular location">
    <subcellularLocation>
        <location evidence="1">Virion membrane</location>
        <topology evidence="1">Peripheral membrane protein</topology>
        <orientation evidence="1">Cytoplasmic side</orientation>
    </subcellularLocation>
    <subcellularLocation>
        <location evidence="1">Host nucleus</location>
    </subcellularLocation>
</comment>
<comment type="alternative products">
    <event type="alternative splicing"/>
    <isoform>
        <id>P69276-1</id>
        <name>M1</name>
        <sequence type="displayed"/>
    </isoform>
    <isoform>
        <id>P10920-1</id>
        <name>M2</name>
        <sequence type="external"/>
    </isoform>
    <text>Only the first 9 residues are shared by the 2 isoforms.</text>
</comment>
<comment type="miscellaneous">
    <text evidence="1">Most abundant protein in virion. When expressed alone can form virus-like particles in transfected cells.</text>
</comment>
<comment type="similarity">
    <text evidence="1">Belongs to the influenza viruses Matrix protein M1 family.</text>
</comment>
<proteinExistence type="inferred from homology"/>
<feature type="chain" id="PRO_0000078865" description="Matrix protein 1">
    <location>
        <begin position="1"/>
        <end position="252"/>
    </location>
</feature>
<feature type="region of interest" description="Membrane-binding" evidence="1">
    <location>
        <begin position="1"/>
        <end position="164"/>
    </location>
</feature>
<feature type="region of interest" description="RNP-binding" evidence="1">
    <location>
        <begin position="165"/>
        <end position="252"/>
    </location>
</feature>
<feature type="short sequence motif" description="Nuclear localization signal" evidence="1">
    <location>
        <begin position="101"/>
        <end position="105"/>
    </location>
</feature>
<evidence type="ECO:0000255" key="1">
    <source>
        <dbReference type="HAMAP-Rule" id="MF_04068"/>
    </source>
</evidence>
<reference key="1">
    <citation type="journal article" date="1989" name="Nucleic Acids Res.">
        <title>Nucleotide sequences of influenza A virus RNA segment 7: a comparison of five isolates.</title>
        <authorList>
            <person name="Zebedee S.L."/>
            <person name="Lamb R.A."/>
        </authorList>
    </citation>
    <scope>NUCLEOTIDE SEQUENCE [GENOMIC RNA]</scope>
</reference>
<gene>
    <name evidence="1" type="primary">M</name>
</gene>
<dbReference type="EMBL" id="X08093">
    <property type="protein sequence ID" value="CAA30892.1"/>
    <property type="molecule type" value="Genomic_RNA"/>
</dbReference>
<dbReference type="SMR" id="P69276"/>
<dbReference type="GO" id="GO:0042025">
    <property type="term" value="C:host cell nucleus"/>
    <property type="evidence" value="ECO:0007669"/>
    <property type="project" value="UniProtKB-SubCell"/>
</dbReference>
<dbReference type="GO" id="GO:0016020">
    <property type="term" value="C:membrane"/>
    <property type="evidence" value="ECO:0007669"/>
    <property type="project" value="UniProtKB-KW"/>
</dbReference>
<dbReference type="GO" id="GO:0055036">
    <property type="term" value="C:virion membrane"/>
    <property type="evidence" value="ECO:0007669"/>
    <property type="project" value="UniProtKB-SubCell"/>
</dbReference>
<dbReference type="GO" id="GO:0003723">
    <property type="term" value="F:RNA binding"/>
    <property type="evidence" value="ECO:0007669"/>
    <property type="project" value="UniProtKB-UniRule"/>
</dbReference>
<dbReference type="GO" id="GO:0039660">
    <property type="term" value="F:structural constituent of virion"/>
    <property type="evidence" value="ECO:0007669"/>
    <property type="project" value="UniProtKB-UniRule"/>
</dbReference>
<dbReference type="GO" id="GO:0046761">
    <property type="term" value="P:viral budding from plasma membrane"/>
    <property type="evidence" value="ECO:0007669"/>
    <property type="project" value="UniProtKB-UniRule"/>
</dbReference>
<dbReference type="FunFam" id="1.10.10.180:FF:000001">
    <property type="entry name" value="Matrix protein 1"/>
    <property type="match status" value="1"/>
</dbReference>
<dbReference type="FunFam" id="1.20.91.10:FF:000001">
    <property type="entry name" value="Matrix protein 1"/>
    <property type="match status" value="1"/>
</dbReference>
<dbReference type="Gene3D" id="1.10.10.180">
    <property type="match status" value="1"/>
</dbReference>
<dbReference type="Gene3D" id="1.20.91.10">
    <property type="match status" value="1"/>
</dbReference>
<dbReference type="HAMAP" id="MF_04068">
    <property type="entry name" value="INFV_M1"/>
    <property type="match status" value="1"/>
</dbReference>
<dbReference type="InterPro" id="IPR036039">
    <property type="entry name" value="Flu_matrix_M1"/>
</dbReference>
<dbReference type="InterPro" id="IPR013188">
    <property type="entry name" value="Flu_matrix_M1_C"/>
</dbReference>
<dbReference type="InterPro" id="IPR001561">
    <property type="entry name" value="Flu_matrix_M1_N"/>
</dbReference>
<dbReference type="InterPro" id="IPR015423">
    <property type="entry name" value="Flu_matrix_M1_N_sub1"/>
</dbReference>
<dbReference type="InterPro" id="IPR015799">
    <property type="entry name" value="Flu_matrix_M1_N_sub2"/>
</dbReference>
<dbReference type="InterPro" id="IPR037533">
    <property type="entry name" value="INFV_M1"/>
</dbReference>
<dbReference type="Pfam" id="PF00598">
    <property type="entry name" value="Flu_M1"/>
    <property type="match status" value="1"/>
</dbReference>
<dbReference type="Pfam" id="PF08289">
    <property type="entry name" value="Flu_M1_C"/>
    <property type="match status" value="1"/>
</dbReference>
<dbReference type="SMART" id="SM00759">
    <property type="entry name" value="Flu_M1_C"/>
    <property type="match status" value="1"/>
</dbReference>
<dbReference type="SUPFAM" id="SSF48145">
    <property type="entry name" value="Influenza virus matrix protein M1"/>
    <property type="match status" value="1"/>
</dbReference>
<accession>P69276</accession>
<accession>P10918</accession>
<name>M1_I57A5</name>
<keyword id="KW-0025">Alternative splicing</keyword>
<keyword id="KW-1048">Host nucleus</keyword>
<keyword id="KW-0472">Membrane</keyword>
<keyword id="KW-0694">RNA-binding</keyword>
<keyword id="KW-0468">Viral matrix protein</keyword>
<keyword id="KW-0946">Virion</keyword>
<organismHost>
    <name type="scientific">Aves</name>
    <dbReference type="NCBI Taxonomy" id="8782"/>
</organismHost>
<organismHost>
    <name type="scientific">Homo sapiens</name>
    <name type="common">Human</name>
    <dbReference type="NCBI Taxonomy" id="9606"/>
</organismHost>
<protein>
    <recommendedName>
        <fullName evidence="1">Matrix protein 1</fullName>
        <shortName evidence="1">M1</shortName>
    </recommendedName>
</protein>
<organism>
    <name type="scientific">Influenza A virus (strain A/Singapore/1/1957 H2N2)</name>
    <dbReference type="NCBI Taxonomy" id="382781"/>
    <lineage>
        <taxon>Viruses</taxon>
        <taxon>Riboviria</taxon>
        <taxon>Orthornavirae</taxon>
        <taxon>Negarnaviricota</taxon>
        <taxon>Polyploviricotina</taxon>
        <taxon>Insthoviricetes</taxon>
        <taxon>Articulavirales</taxon>
        <taxon>Orthomyxoviridae</taxon>
        <taxon>Alphainfluenzavirus</taxon>
        <taxon>Alphainfluenzavirus influenzae</taxon>
        <taxon>Influenza A virus</taxon>
    </lineage>
</organism>
<sequence>MSLLTEVETYVLSIVPSGPLKAEIAQRLEDVFAGKNTDLEALMEWLKTRPILSPLTKGILGFVFTLTVPSERGLQRRRFVQNALNGNGDPNNMDRAVKLYRKLKREITFHGAKEIALSYSAGALASCMGLIYNRMGAVTTEVAFGLVCATCEQIADSQHRSHRQMVTTTNPLIRHENRMVLASTTAKAMEQMAGSSEQAAEAMEVASQARQMVQAMRAIGTHPRSSAGLKDDLLENLQAYQKRMGVQMQRFK</sequence>